<accession>C0LTM1</accession>
<comment type="function">
    <text evidence="1 2">Involved in the biosynthesis of the antitumor antibiotic sibiromycin (PubMed:19270142, PubMed:21612226). Hydroxylates the C5 position of the peptidyl carrier protein (PCP)-bound 4-methyl-3-hydroxyanthranilic acid (4-MHA or 3H4MAA), leading to the formation of the fully substituted anthranilate moiety found in sibiromycin (PubMed:21612226).</text>
</comment>
<comment type="catalytic activity">
    <reaction evidence="2">
        <text>3-hydroxy-4-methylanthranilyl-[aryl-carrier protein] + NADH + O2 + H(+) = 3,5-dihydroxy-4-methylanthranilyl-[aryl-carrier protein] + NAD(+) + H2O</text>
        <dbReference type="Rhea" id="RHEA:49716"/>
        <dbReference type="Rhea" id="RHEA-COMP:12474"/>
        <dbReference type="Rhea" id="RHEA-COMP:12475"/>
        <dbReference type="ChEBI" id="CHEBI:15377"/>
        <dbReference type="ChEBI" id="CHEBI:15378"/>
        <dbReference type="ChEBI" id="CHEBI:15379"/>
        <dbReference type="ChEBI" id="CHEBI:57540"/>
        <dbReference type="ChEBI" id="CHEBI:57945"/>
        <dbReference type="ChEBI" id="CHEBI:131912"/>
        <dbReference type="ChEBI" id="CHEBI:131913"/>
        <dbReference type="EC" id="1.14.13.223"/>
    </reaction>
</comment>
<comment type="cofactor">
    <cofactor evidence="2">
        <name>FAD</name>
        <dbReference type="ChEBI" id="CHEBI:57692"/>
    </cofactor>
</comment>
<comment type="biophysicochemical properties">
    <kinetics>
        <KM evidence="2">743 uM for SibE-PCP-3H4MAA</KM>
        <text evidence="2">kcat is 88 min(-1) with SibE-PCP-3H4MAA as substrate.</text>
    </kinetics>
</comment>
<comment type="pathway">
    <text evidence="1 2">Antibiotic biosynthesis.</text>
</comment>
<comment type="similarity">
    <text evidence="5">Belongs to the aromatic-ring hydroxylase family.</text>
</comment>
<evidence type="ECO:0000269" key="1">
    <source>
    </source>
</evidence>
<evidence type="ECO:0000269" key="2">
    <source>
    </source>
</evidence>
<evidence type="ECO:0000303" key="3">
    <source>
    </source>
</evidence>
<evidence type="ECO:0000303" key="4">
    <source>
    </source>
</evidence>
<evidence type="ECO:0000305" key="5"/>
<gene>
    <name evidence="3" type="primary">sibG</name>
</gene>
<organism>
    <name type="scientific">Streptosporangium sibiricum</name>
    <dbReference type="NCBI Taxonomy" id="457432"/>
    <lineage>
        <taxon>Bacteria</taxon>
        <taxon>Bacillati</taxon>
        <taxon>Actinomycetota</taxon>
        <taxon>Actinomycetes</taxon>
        <taxon>Streptosporangiales</taxon>
        <taxon>Streptosporangiaceae</taxon>
        <taxon>Streptosporangium</taxon>
    </lineage>
</organism>
<proteinExistence type="evidence at protein level"/>
<sequence length="351" mass="38088">MRILVNGGGPAGMAFAMFAARSGRGDEITVRDWTGPGDTYGFGVILPPAAVEVFRDAEPDLADELNSHITAWDRLSVHRHGRTASIPAPRLGAMDRRTLLKVLRRRCAERGVRFEHGAVDPALGDHDLVVAADGARSVTRRHRAAAFGTTTREIGPAYIWLGADRALEHLRFLVAETPDGPAVAHAYPYSPDRSTFLVEADGAPPPAVLAEWFAGPLGGARLLENRSRWSRFQEIHNRTWSAGNVVLIGDAAHTAHYSIGSGTRLALDDARALADALCAQPRLADALKGYEDARRPIVEHTQRIGRLSATWFTRLPDVPMERLLDDLATRGGQISWRDLATEGSGAVPVRG</sequence>
<reference key="1">
    <citation type="journal article" date="2009" name="Appl. Environ. Microbiol.">
        <title>Biosynthesis of sibiromycin, a potent antitumor antibiotic.</title>
        <authorList>
            <person name="Li W."/>
            <person name="Khullar A."/>
            <person name="Chou S."/>
            <person name="Sacramo A."/>
            <person name="Gerratana B."/>
        </authorList>
    </citation>
    <scope>NUCLEOTIDE SEQUENCE [GENOMIC DNA]</scope>
    <scope>FUNCTION</scope>
    <scope>PATHWAY</scope>
    <source>
        <strain>ATCC 29053 / DSM 44093</strain>
    </source>
</reference>
<reference key="2">
    <citation type="journal article" date="2011" name="Biochemistry">
        <title>A four-enzyme pathway for 3,5-dihydroxy-4-methylanthranilic acid formation and incorporation into the antitumor antibiotic sibiromycin.</title>
        <authorList>
            <person name="Giessen T.W."/>
            <person name="Kraas F.I."/>
            <person name="Marahiel M.A."/>
        </authorList>
    </citation>
    <scope>FUNCTION</scope>
    <scope>CATALYTIC ACTIVITY</scope>
    <scope>COFACTOR</scope>
    <scope>BIOPHYSICOCHEMICAL PROPERTIES</scope>
    <scope>PATHWAY</scope>
    <source>
        <strain>ATCC 29053 / DSM 44093</strain>
    </source>
</reference>
<dbReference type="EC" id="1.14.13.223" evidence="2"/>
<dbReference type="EMBL" id="FJ768674">
    <property type="protein sequence ID" value="ACN39730.1"/>
    <property type="molecule type" value="Genomic_DNA"/>
</dbReference>
<dbReference type="SMR" id="C0LTM1"/>
<dbReference type="KEGG" id="ag:ACN39730"/>
<dbReference type="BioCyc" id="MetaCyc:MONOMER-19739"/>
<dbReference type="BRENDA" id="1.14.13.223">
    <property type="organism ID" value="14625"/>
</dbReference>
<dbReference type="GO" id="GO:0071949">
    <property type="term" value="F:FAD binding"/>
    <property type="evidence" value="ECO:0000314"/>
    <property type="project" value="UniProtKB"/>
</dbReference>
<dbReference type="GO" id="GO:0004497">
    <property type="term" value="F:monooxygenase activity"/>
    <property type="evidence" value="ECO:0000314"/>
    <property type="project" value="UniProtKB"/>
</dbReference>
<dbReference type="GO" id="GO:0070403">
    <property type="term" value="F:NAD+ binding"/>
    <property type="evidence" value="ECO:0000314"/>
    <property type="project" value="UniProtKB"/>
</dbReference>
<dbReference type="GO" id="GO:0017000">
    <property type="term" value="P:antibiotic biosynthetic process"/>
    <property type="evidence" value="ECO:0007669"/>
    <property type="project" value="UniProtKB-KW"/>
</dbReference>
<dbReference type="Gene3D" id="3.30.9.20">
    <property type="match status" value="1"/>
</dbReference>
<dbReference type="Gene3D" id="3.50.50.60">
    <property type="entry name" value="FAD/NAD(P)-binding domain"/>
    <property type="match status" value="1"/>
</dbReference>
<dbReference type="InterPro" id="IPR002938">
    <property type="entry name" value="FAD-bd"/>
</dbReference>
<dbReference type="InterPro" id="IPR036188">
    <property type="entry name" value="FAD/NAD-bd_sf"/>
</dbReference>
<dbReference type="InterPro" id="IPR050631">
    <property type="entry name" value="PheA/TfdB_FAD_monoxygenase"/>
</dbReference>
<dbReference type="PANTHER" id="PTHR43476">
    <property type="entry name" value="3-(3-HYDROXY-PHENYL)PROPIONATE/3-HYDROXYCINNAMIC ACID HYDROXYLASE"/>
    <property type="match status" value="1"/>
</dbReference>
<dbReference type="PANTHER" id="PTHR43476:SF4">
    <property type="entry name" value="BLR0106 PROTEIN"/>
    <property type="match status" value="1"/>
</dbReference>
<dbReference type="Pfam" id="PF01494">
    <property type="entry name" value="FAD_binding_3"/>
    <property type="match status" value="1"/>
</dbReference>
<dbReference type="Pfam" id="PF05834">
    <property type="entry name" value="Lycopene_cycl"/>
    <property type="match status" value="1"/>
</dbReference>
<dbReference type="PRINTS" id="PR00420">
    <property type="entry name" value="RNGMNOXGNASE"/>
</dbReference>
<dbReference type="SUPFAM" id="SSF51905">
    <property type="entry name" value="FAD/NAD(P)-binding domain"/>
    <property type="match status" value="1"/>
</dbReference>
<keyword id="KW-0045">Antibiotic biosynthesis</keyword>
<keyword id="KW-0274">FAD</keyword>
<keyword id="KW-0285">Flavoprotein</keyword>
<keyword id="KW-0503">Monooxygenase</keyword>
<keyword id="KW-0520">NAD</keyword>
<keyword id="KW-0560">Oxidoreductase</keyword>
<protein>
    <recommendedName>
        <fullName evidence="5">3-hydroxy-4-methyl-anthranilyl-[aryl-carrier protein] 5-monooxygenase</fullName>
        <ecNumber evidence="2">1.14.13.223</ecNumber>
    </recommendedName>
    <alternativeName>
        <fullName evidence="4">FAD/NADH-dependent hydroxylase SibG</fullName>
    </alternativeName>
</protein>
<feature type="chain" id="PRO_0000453573" description="3-hydroxy-4-methyl-anthranilyl-[aryl-carrier protein] 5-monooxygenase">
    <location>
        <begin position="1"/>
        <end position="351"/>
    </location>
</feature>
<name>SIBG_STRSJ</name>